<proteinExistence type="inferred from homology"/>
<gene>
    <name evidence="1" type="primary">rplU</name>
    <name type="ordered locus">ECIAI1_3334</name>
</gene>
<name>RL21_ECO8A</name>
<protein>
    <recommendedName>
        <fullName evidence="1">Large ribosomal subunit protein bL21</fullName>
    </recommendedName>
    <alternativeName>
        <fullName evidence="2">50S ribosomal protein L21</fullName>
    </alternativeName>
</protein>
<evidence type="ECO:0000255" key="1">
    <source>
        <dbReference type="HAMAP-Rule" id="MF_01363"/>
    </source>
</evidence>
<evidence type="ECO:0000305" key="2"/>
<keyword id="KW-0687">Ribonucleoprotein</keyword>
<keyword id="KW-0689">Ribosomal protein</keyword>
<keyword id="KW-0694">RNA-binding</keyword>
<keyword id="KW-0699">rRNA-binding</keyword>
<comment type="function">
    <text evidence="1">This protein binds to 23S rRNA in the presence of protein L20.</text>
</comment>
<comment type="subunit">
    <text evidence="1">Part of the 50S ribosomal subunit. Contacts protein L20.</text>
</comment>
<comment type="similarity">
    <text evidence="1">Belongs to the bacterial ribosomal protein bL21 family.</text>
</comment>
<dbReference type="EMBL" id="CU928160">
    <property type="protein sequence ID" value="CAR00148.1"/>
    <property type="molecule type" value="Genomic_DNA"/>
</dbReference>
<dbReference type="RefSeq" id="WP_000271401.1">
    <property type="nucleotide sequence ID" value="NC_011741.1"/>
</dbReference>
<dbReference type="SMR" id="B7M092"/>
<dbReference type="GeneID" id="93778795"/>
<dbReference type="KEGG" id="ecr:ECIAI1_3334"/>
<dbReference type="HOGENOM" id="CLU_061463_3_3_6"/>
<dbReference type="GO" id="GO:0005737">
    <property type="term" value="C:cytoplasm"/>
    <property type="evidence" value="ECO:0007669"/>
    <property type="project" value="UniProtKB-ARBA"/>
</dbReference>
<dbReference type="GO" id="GO:1990904">
    <property type="term" value="C:ribonucleoprotein complex"/>
    <property type="evidence" value="ECO:0007669"/>
    <property type="project" value="UniProtKB-KW"/>
</dbReference>
<dbReference type="GO" id="GO:0005840">
    <property type="term" value="C:ribosome"/>
    <property type="evidence" value="ECO:0007669"/>
    <property type="project" value="UniProtKB-KW"/>
</dbReference>
<dbReference type="GO" id="GO:0019843">
    <property type="term" value="F:rRNA binding"/>
    <property type="evidence" value="ECO:0007669"/>
    <property type="project" value="UniProtKB-UniRule"/>
</dbReference>
<dbReference type="GO" id="GO:0003735">
    <property type="term" value="F:structural constituent of ribosome"/>
    <property type="evidence" value="ECO:0007669"/>
    <property type="project" value="InterPro"/>
</dbReference>
<dbReference type="GO" id="GO:0006412">
    <property type="term" value="P:translation"/>
    <property type="evidence" value="ECO:0007669"/>
    <property type="project" value="UniProtKB-UniRule"/>
</dbReference>
<dbReference type="HAMAP" id="MF_01363">
    <property type="entry name" value="Ribosomal_bL21"/>
    <property type="match status" value="1"/>
</dbReference>
<dbReference type="InterPro" id="IPR028909">
    <property type="entry name" value="bL21-like"/>
</dbReference>
<dbReference type="InterPro" id="IPR036164">
    <property type="entry name" value="bL21-like_sf"/>
</dbReference>
<dbReference type="InterPro" id="IPR001787">
    <property type="entry name" value="Ribosomal_bL21"/>
</dbReference>
<dbReference type="InterPro" id="IPR018258">
    <property type="entry name" value="Ribosomal_bL21_CS"/>
</dbReference>
<dbReference type="NCBIfam" id="TIGR00061">
    <property type="entry name" value="L21"/>
    <property type="match status" value="1"/>
</dbReference>
<dbReference type="PANTHER" id="PTHR21349">
    <property type="entry name" value="50S RIBOSOMAL PROTEIN L21"/>
    <property type="match status" value="1"/>
</dbReference>
<dbReference type="PANTHER" id="PTHR21349:SF0">
    <property type="entry name" value="LARGE RIBOSOMAL SUBUNIT PROTEIN BL21M"/>
    <property type="match status" value="1"/>
</dbReference>
<dbReference type="Pfam" id="PF00829">
    <property type="entry name" value="Ribosomal_L21p"/>
    <property type="match status" value="1"/>
</dbReference>
<dbReference type="SUPFAM" id="SSF141091">
    <property type="entry name" value="L21p-like"/>
    <property type="match status" value="1"/>
</dbReference>
<dbReference type="PROSITE" id="PS01169">
    <property type="entry name" value="RIBOSOMAL_L21"/>
    <property type="match status" value="1"/>
</dbReference>
<accession>B7M092</accession>
<sequence length="103" mass="11564">MYAVFQSGGKQHRVSEGQTVRLEKLDIATGETVEFAEVLMIANGEEVKIGVPFVDGGVIKAEVVAHGRGEKVKIVKFRRRKHYRKQQGHRQWFTDVKITGISA</sequence>
<feature type="chain" id="PRO_1000143791" description="Large ribosomal subunit protein bL21">
    <location>
        <begin position="1"/>
        <end position="103"/>
    </location>
</feature>
<reference key="1">
    <citation type="journal article" date="2009" name="PLoS Genet.">
        <title>Organised genome dynamics in the Escherichia coli species results in highly diverse adaptive paths.</title>
        <authorList>
            <person name="Touchon M."/>
            <person name="Hoede C."/>
            <person name="Tenaillon O."/>
            <person name="Barbe V."/>
            <person name="Baeriswyl S."/>
            <person name="Bidet P."/>
            <person name="Bingen E."/>
            <person name="Bonacorsi S."/>
            <person name="Bouchier C."/>
            <person name="Bouvet O."/>
            <person name="Calteau A."/>
            <person name="Chiapello H."/>
            <person name="Clermont O."/>
            <person name="Cruveiller S."/>
            <person name="Danchin A."/>
            <person name="Diard M."/>
            <person name="Dossat C."/>
            <person name="Karoui M.E."/>
            <person name="Frapy E."/>
            <person name="Garry L."/>
            <person name="Ghigo J.M."/>
            <person name="Gilles A.M."/>
            <person name="Johnson J."/>
            <person name="Le Bouguenec C."/>
            <person name="Lescat M."/>
            <person name="Mangenot S."/>
            <person name="Martinez-Jehanne V."/>
            <person name="Matic I."/>
            <person name="Nassif X."/>
            <person name="Oztas S."/>
            <person name="Petit M.A."/>
            <person name="Pichon C."/>
            <person name="Rouy Z."/>
            <person name="Ruf C.S."/>
            <person name="Schneider D."/>
            <person name="Tourret J."/>
            <person name="Vacherie B."/>
            <person name="Vallenet D."/>
            <person name="Medigue C."/>
            <person name="Rocha E.P.C."/>
            <person name="Denamur E."/>
        </authorList>
    </citation>
    <scope>NUCLEOTIDE SEQUENCE [LARGE SCALE GENOMIC DNA]</scope>
    <source>
        <strain>IAI1</strain>
    </source>
</reference>
<organism>
    <name type="scientific">Escherichia coli O8 (strain IAI1)</name>
    <dbReference type="NCBI Taxonomy" id="585034"/>
    <lineage>
        <taxon>Bacteria</taxon>
        <taxon>Pseudomonadati</taxon>
        <taxon>Pseudomonadota</taxon>
        <taxon>Gammaproteobacteria</taxon>
        <taxon>Enterobacterales</taxon>
        <taxon>Enterobacteriaceae</taxon>
        <taxon>Escherichia</taxon>
    </lineage>
</organism>